<organism>
    <name type="scientific">Acidianus two-tailed virus</name>
    <name type="common">ATV</name>
    <dbReference type="NCBI Taxonomy" id="315953"/>
    <lineage>
        <taxon>Viruses</taxon>
        <taxon>Viruses incertae sedis</taxon>
        <taxon>Bicaudaviridae</taxon>
        <taxon>Bicaudavirus</taxon>
    </lineage>
</organism>
<organismHost>
    <name type="scientific">Acidianus convivator</name>
    <dbReference type="NCBI Taxonomy" id="269667"/>
</organismHost>
<keyword id="KW-1185">Reference proteome</keyword>
<proteinExistence type="predicted"/>
<sequence>MPSKTTSSTNVREELIKRSLDETVAQYMTLCFDPKHRFSSPVQTFNTLLLIASQHVINVSPDSKKMIEEIVNNAQNAQNYDELRGYIEELCAKMYPYIFRLNVKVNTISVKFKSLPPSTANEVLLGVASEIIRQLYSTAVFDENIEVVTEKFVKLRDITLKLLRSIQNTTLYQYMKSIGLDENYVMKPCESELPVQCFLEIQSRLLEVVEFIATHMNARF</sequence>
<reference key="1">
    <citation type="journal article" date="2005" name="Nature">
        <title>Virology: independent virus development outside a host.</title>
        <authorList>
            <person name="Haring M."/>
            <person name="Vestergaard G."/>
            <person name="Rachel R."/>
            <person name="Chen L."/>
            <person name="Garrett R.A."/>
            <person name="Prangishvili D."/>
        </authorList>
    </citation>
    <scope>NUCLEOTIDE SEQUENCE [GENOMIC DNA]</scope>
</reference>
<dbReference type="EMBL" id="AJ888457">
    <property type="protein sequence ID" value="CAI59861.1"/>
    <property type="molecule type" value="Genomic_DNA"/>
</dbReference>
<dbReference type="RefSeq" id="YP_319866.1">
    <property type="nucleotide sequence ID" value="NC_007409.1"/>
</dbReference>
<dbReference type="SMR" id="Q3V4V3"/>
<dbReference type="GeneID" id="4484236"/>
<dbReference type="KEGG" id="vg:4484236"/>
<dbReference type="Proteomes" id="UP000002150">
    <property type="component" value="Genome"/>
</dbReference>
<accession>Q3V4V3</accession>
<name>Y220_ATV</name>
<protein>
    <recommendedName>
        <fullName>Uncharacterized protein ORF220</fullName>
    </recommendedName>
</protein>
<feature type="chain" id="PRO_0000389062" description="Uncharacterized protein ORF220">
    <location>
        <begin position="1"/>
        <end position="220"/>
    </location>
</feature>